<keyword id="KW-0067">ATP-binding</keyword>
<keyword id="KW-0143">Chaperone</keyword>
<keyword id="KW-0963">Cytoplasm</keyword>
<keyword id="KW-0206">Cytoskeleton</keyword>
<keyword id="KW-0221">Differentiation</keyword>
<keyword id="KW-0488">Methylation</keyword>
<keyword id="KW-0547">Nucleotide-binding</keyword>
<keyword id="KW-0597">Phosphoprotein</keyword>
<keyword id="KW-1185">Reference proteome</keyword>
<keyword id="KW-0744">Spermatogenesis</keyword>
<keyword id="KW-0346">Stress response</keyword>
<name>HSP72_BOVIN</name>
<gene>
    <name type="primary">HSPA2</name>
    <name type="synonym">HSP70-3</name>
    <name type="synonym">HSPA3</name>
</gene>
<reference key="1">
    <citation type="journal article" date="1992" name="Genomics">
        <title>Syntenic conservation of HSP70 genes in cattle and humans.</title>
        <authorList>
            <person name="Grosz M.D."/>
            <person name="Womack J.E."/>
            <person name="Skow L.C."/>
        </authorList>
    </citation>
    <scope>NUCLEOTIDE SEQUENCE [GENOMIC DNA]</scope>
</reference>
<reference key="2">
    <citation type="submission" date="2005-09" db="EMBL/GenBank/DDBJ databases">
        <authorList>
            <consortium name="NIH - Mammalian Gene Collection (MGC) project"/>
        </authorList>
    </citation>
    <scope>NUCLEOTIDE SEQUENCE [LARGE SCALE MRNA]</scope>
    <source>
        <strain>Crossbred X Angus</strain>
        <tissue>Liver</tissue>
    </source>
</reference>
<comment type="function">
    <text evidence="4 5">Molecular chaperone implicated in a wide variety of cellular processes, including protection of the proteome from stress, folding and transport of newly synthesized polypeptides, activation of proteolysis of misfolded proteins and the formation and dissociation of protein complexes. Plays a pivotal role in the protein quality control system, ensuring the correct folding of proteins, the re-folding of misfolded proteins and controlling the targeting of proteins for subsequent degradation. This is achieved through cycles of ATP binding, ATP hydrolysis and ADP release, mediated by co-chaperones. In the ATP-bound form, it has a low affinity for substrate proteins. However, upon hydrolysis of the ATP to ADP, it undergoes a conformational change that increases its affinity for substrate proteins. It goes through repeated cycles of ATP hydrolysis and nucleotide exchange, which permits cycles of substrate binding and release. Plays a role in spermatogenesis. In association with SHCBP1L may participate in the maintenance of spindle integrity during meiosis in male germ cells.</text>
</comment>
<comment type="subunit">
    <text evidence="4 5">Interacts with FKBP6. Interacts with ZNF541. Component of the CatSper complex. Interacts with RABL2/RABL2A; binds preferentially to GTP-bound RABL2. Interacts with SHCBP1L; this interaction may promote the recruitment of HSPA2 to the spindle. Interacts with MOV10L1 (By similarity).</text>
</comment>
<comment type="subcellular location">
    <subcellularLocation>
        <location evidence="4">Cytoplasm</location>
        <location evidence="4">Cytoskeleton</location>
        <location evidence="4">Spindle</location>
    </subcellularLocation>
    <text evidence="4">Colocalizes with SHCBP1L at spindle during the meiosis process.</text>
</comment>
<comment type="domain">
    <text evidence="5">The N-terminal nucleotide binding domain (NBD) (also known as the ATPase domain) is responsible for binding and hydrolyzing ATP. The C-terminal substrate-binding domain (SBD) (also known as peptide-binding domain) binds to the client/substrate proteins. The two domains are allosterically coupled so that, when ATP is bound to the NBD, the SBD binds relatively weakly to clients. When ADP is bound in the NBD, a conformational change enhances the affinity of the SBD for client proteins.</text>
</comment>
<comment type="similarity">
    <text evidence="7">Belongs to the heat shock protein 70 family.</text>
</comment>
<sequence length="636" mass="69740">MSARGPAIGIDLGTTYSCVGVFQHGKVEIIANDQGNRTTPSYVAFTDTERLIGDAAKNQVAMNPTNTIFDAKRLIGRKFEDATVQSDMKHWPFRVVSEGGKPKVQVEYKGEIKTFFPEEISSMVLTKMKEIAEAYLGGKVQSAVITVPAYFNDSQRQATKDAGTITGLNVLRIINEPTAAAIAYGLDKKGCAGGEKNVLIFDLGGGTFDVSILTIEDGIFEVKSTAGDTHLGGEDFDNSMVSHLAEEFKRKHKKDIAPNKRAVRRLRTACERAKRTLSSSTQASIEIDSLYEGVDFYTSITRARFEELNADLFRGTLEPVEKALRDAKLDKGQIQEIVLVGGSTRIPKIQKLLQDFFNGKELNKSINPDEAVAYGAAVQAAILIGDKSENVQDLLLLDVTPLSLGIETAGGVMTPLIKRNTTIPTKQTQTFTTYSDNQSSVLVQVYEGERAMTKDNNLLGKFDLTGIPPAPRGVPQIEVTFDIDANGILNVTAADKSTGKENKITITNDKGRLSKDDIDRMVQEAERYKSEDEANRDRVAAKNAVESYTYNIKQTVEDEKLRGKISDQDKNKILDKCQEVINWLDRNQMAEKDEYEHKQKELERVCNPIISKLYQGGPGGGGGSGASGGPTIEEVD</sequence>
<dbReference type="EMBL" id="L10428">
    <property type="protein sequence ID" value="AAA30569.1"/>
    <property type="molecule type" value="Genomic_DNA"/>
</dbReference>
<dbReference type="EMBL" id="BC105156">
    <property type="protein sequence ID" value="AAI05157.1"/>
    <property type="molecule type" value="mRNA"/>
</dbReference>
<dbReference type="RefSeq" id="NP_776769.1">
    <property type="nucleotide sequence ID" value="NM_174344.1"/>
</dbReference>
<dbReference type="SMR" id="P34933"/>
<dbReference type="FunCoup" id="P34933">
    <property type="interactions" value="1503"/>
</dbReference>
<dbReference type="STRING" id="9913.ENSBTAP00000061981"/>
<dbReference type="PeptideAtlas" id="P34933"/>
<dbReference type="GeneID" id="281827"/>
<dbReference type="KEGG" id="bta:281827"/>
<dbReference type="CTD" id="3306"/>
<dbReference type="InParanoid" id="P34933"/>
<dbReference type="OrthoDB" id="2401965at2759"/>
<dbReference type="PRO" id="PR:P34933"/>
<dbReference type="Proteomes" id="UP000009136">
    <property type="component" value="Unplaced"/>
</dbReference>
<dbReference type="GO" id="GO:0036128">
    <property type="term" value="C:CatSper complex"/>
    <property type="evidence" value="ECO:0000250"/>
    <property type="project" value="UniProtKB"/>
</dbReference>
<dbReference type="GO" id="GO:0005737">
    <property type="term" value="C:cytoplasm"/>
    <property type="evidence" value="ECO:0000318"/>
    <property type="project" value="GO_Central"/>
</dbReference>
<dbReference type="GO" id="GO:0005829">
    <property type="term" value="C:cytosol"/>
    <property type="evidence" value="ECO:0000318"/>
    <property type="project" value="GO_Central"/>
</dbReference>
<dbReference type="GO" id="GO:0072687">
    <property type="term" value="C:meiotic spindle"/>
    <property type="evidence" value="ECO:0000250"/>
    <property type="project" value="UniProtKB"/>
</dbReference>
<dbReference type="GO" id="GO:0005634">
    <property type="term" value="C:nucleus"/>
    <property type="evidence" value="ECO:0000318"/>
    <property type="project" value="GO_Central"/>
</dbReference>
<dbReference type="GO" id="GO:0005886">
    <property type="term" value="C:plasma membrane"/>
    <property type="evidence" value="ECO:0000318"/>
    <property type="project" value="GO_Central"/>
</dbReference>
<dbReference type="GO" id="GO:0005524">
    <property type="term" value="F:ATP binding"/>
    <property type="evidence" value="ECO:0007669"/>
    <property type="project" value="UniProtKB-KW"/>
</dbReference>
<dbReference type="GO" id="GO:0016887">
    <property type="term" value="F:ATP hydrolysis activity"/>
    <property type="evidence" value="ECO:0000318"/>
    <property type="project" value="GO_Central"/>
</dbReference>
<dbReference type="GO" id="GO:0140662">
    <property type="term" value="F:ATP-dependent protein folding chaperone"/>
    <property type="evidence" value="ECO:0007669"/>
    <property type="project" value="InterPro"/>
</dbReference>
<dbReference type="GO" id="GO:0031072">
    <property type="term" value="F:heat shock protein binding"/>
    <property type="evidence" value="ECO:0000318"/>
    <property type="project" value="GO_Central"/>
</dbReference>
<dbReference type="GO" id="GO:0044183">
    <property type="term" value="F:protein folding chaperone"/>
    <property type="evidence" value="ECO:0000318"/>
    <property type="project" value="GO_Central"/>
</dbReference>
<dbReference type="GO" id="GO:0030154">
    <property type="term" value="P:cell differentiation"/>
    <property type="evidence" value="ECO:0007669"/>
    <property type="project" value="UniProtKB-KW"/>
</dbReference>
<dbReference type="GO" id="GO:0051085">
    <property type="term" value="P:chaperone cofactor-dependent protein refolding"/>
    <property type="evidence" value="ECO:0000318"/>
    <property type="project" value="GO_Central"/>
</dbReference>
<dbReference type="GO" id="GO:0042026">
    <property type="term" value="P:protein refolding"/>
    <property type="evidence" value="ECO:0000318"/>
    <property type="project" value="GO_Central"/>
</dbReference>
<dbReference type="GO" id="GO:0009409">
    <property type="term" value="P:response to cold"/>
    <property type="evidence" value="ECO:0000250"/>
    <property type="project" value="AgBase"/>
</dbReference>
<dbReference type="GO" id="GO:0009408">
    <property type="term" value="P:response to heat"/>
    <property type="evidence" value="ECO:0000250"/>
    <property type="project" value="AgBase"/>
</dbReference>
<dbReference type="GO" id="GO:0007283">
    <property type="term" value="P:spermatogenesis"/>
    <property type="evidence" value="ECO:0000250"/>
    <property type="project" value="UniProtKB"/>
</dbReference>
<dbReference type="CDD" id="cd10233">
    <property type="entry name" value="ASKHA_NBD_HSP70_HSPA1"/>
    <property type="match status" value="1"/>
</dbReference>
<dbReference type="FunFam" id="2.60.34.10:FF:000002">
    <property type="entry name" value="Heat shock 70 kDa"/>
    <property type="match status" value="1"/>
</dbReference>
<dbReference type="FunFam" id="3.30.420.40:FF:000172">
    <property type="entry name" value="Heat shock 70 kDa protein"/>
    <property type="match status" value="1"/>
</dbReference>
<dbReference type="FunFam" id="3.90.640.10:FF:000058">
    <property type="entry name" value="Heat shock 70 kDa protein"/>
    <property type="match status" value="1"/>
</dbReference>
<dbReference type="FunFam" id="1.20.1270.10:FF:000010">
    <property type="entry name" value="Heat shock 70 kDa protein 2"/>
    <property type="match status" value="1"/>
</dbReference>
<dbReference type="FunFam" id="3.30.30.30:FF:000001">
    <property type="entry name" value="heat shock 70 kDa protein-like"/>
    <property type="match status" value="1"/>
</dbReference>
<dbReference type="FunFam" id="3.30.420.40:FF:000135">
    <property type="entry name" value="Heat shock cognate 71 kDa protein"/>
    <property type="match status" value="1"/>
</dbReference>
<dbReference type="FunFam" id="3.30.420.40:FF:000026">
    <property type="entry name" value="Heat shock protein 70"/>
    <property type="match status" value="1"/>
</dbReference>
<dbReference type="Gene3D" id="1.20.1270.10">
    <property type="match status" value="1"/>
</dbReference>
<dbReference type="Gene3D" id="3.30.30.30">
    <property type="match status" value="1"/>
</dbReference>
<dbReference type="Gene3D" id="3.30.420.40">
    <property type="match status" value="2"/>
</dbReference>
<dbReference type="Gene3D" id="3.90.640.10">
    <property type="entry name" value="Actin, Chain A, domain 4"/>
    <property type="match status" value="1"/>
</dbReference>
<dbReference type="Gene3D" id="2.60.34.10">
    <property type="entry name" value="Substrate Binding Domain Of DNAk, Chain A, domain 1"/>
    <property type="match status" value="1"/>
</dbReference>
<dbReference type="InterPro" id="IPR043129">
    <property type="entry name" value="ATPase_NBD"/>
</dbReference>
<dbReference type="InterPro" id="IPR018181">
    <property type="entry name" value="Heat_shock_70_CS"/>
</dbReference>
<dbReference type="InterPro" id="IPR029048">
    <property type="entry name" value="HSP70_C_sf"/>
</dbReference>
<dbReference type="InterPro" id="IPR029047">
    <property type="entry name" value="HSP70_peptide-bd_sf"/>
</dbReference>
<dbReference type="InterPro" id="IPR013126">
    <property type="entry name" value="Hsp_70_fam"/>
</dbReference>
<dbReference type="NCBIfam" id="NF001413">
    <property type="entry name" value="PRK00290.1"/>
    <property type="match status" value="1"/>
</dbReference>
<dbReference type="PANTHER" id="PTHR19375">
    <property type="entry name" value="HEAT SHOCK PROTEIN 70KDA"/>
    <property type="match status" value="1"/>
</dbReference>
<dbReference type="Pfam" id="PF00012">
    <property type="entry name" value="HSP70"/>
    <property type="match status" value="1"/>
</dbReference>
<dbReference type="PRINTS" id="PR00301">
    <property type="entry name" value="HEATSHOCK70"/>
</dbReference>
<dbReference type="SUPFAM" id="SSF53067">
    <property type="entry name" value="Actin-like ATPase domain"/>
    <property type="match status" value="2"/>
</dbReference>
<dbReference type="SUPFAM" id="SSF100934">
    <property type="entry name" value="Heat shock protein 70kD (HSP70), C-terminal subdomain"/>
    <property type="match status" value="1"/>
</dbReference>
<dbReference type="SUPFAM" id="SSF100920">
    <property type="entry name" value="Heat shock protein 70kD (HSP70), peptide-binding domain"/>
    <property type="match status" value="1"/>
</dbReference>
<dbReference type="PROSITE" id="PS00297">
    <property type="entry name" value="HSP70_1"/>
    <property type="match status" value="1"/>
</dbReference>
<dbReference type="PROSITE" id="PS00329">
    <property type="entry name" value="HSP70_2"/>
    <property type="match status" value="1"/>
</dbReference>
<dbReference type="PROSITE" id="PS01036">
    <property type="entry name" value="HSP70_3"/>
    <property type="match status" value="1"/>
</dbReference>
<accession>P34933</accession>
<accession>Q3MHP7</accession>
<protein>
    <recommendedName>
        <fullName>Heat shock-related 70 kDa protein 2</fullName>
    </recommendedName>
    <alternativeName>
        <fullName>Heat shock 70 kDa protein 3</fullName>
        <shortName>HSP70.3</shortName>
    </alternativeName>
</protein>
<evidence type="ECO:0000250" key="1"/>
<evidence type="ECO:0000250" key="2">
    <source>
        <dbReference type="UniProtKB" id="P11142"/>
    </source>
</evidence>
<evidence type="ECO:0000250" key="3">
    <source>
        <dbReference type="UniProtKB" id="P14659"/>
    </source>
</evidence>
<evidence type="ECO:0000250" key="4">
    <source>
        <dbReference type="UniProtKB" id="P17156"/>
    </source>
</evidence>
<evidence type="ECO:0000250" key="5">
    <source>
        <dbReference type="UniProtKB" id="P54652"/>
    </source>
</evidence>
<evidence type="ECO:0000256" key="6">
    <source>
        <dbReference type="SAM" id="MobiDB-lite"/>
    </source>
</evidence>
<evidence type="ECO:0000305" key="7"/>
<feature type="chain" id="PRO_0000078261" description="Heat shock-related 70 kDa protein 2">
    <location>
        <begin position="1"/>
        <end position="636"/>
    </location>
</feature>
<feature type="region of interest" description="Nucleotide-binding domain (NBD)" evidence="2">
    <location>
        <begin position="2"/>
        <end position="389"/>
    </location>
</feature>
<feature type="region of interest" description="Substrate-binding domain (SBD)" evidence="2">
    <location>
        <begin position="397"/>
        <end position="512"/>
    </location>
</feature>
<feature type="region of interest" description="Disordered" evidence="6">
    <location>
        <begin position="613"/>
        <end position="636"/>
    </location>
</feature>
<feature type="compositionally biased region" description="Gly residues" evidence="6">
    <location>
        <begin position="616"/>
        <end position="628"/>
    </location>
</feature>
<feature type="binding site" evidence="1">
    <location>
        <begin position="13"/>
        <end position="16"/>
    </location>
    <ligand>
        <name>ATP</name>
        <dbReference type="ChEBI" id="CHEBI:30616"/>
    </ligand>
</feature>
<feature type="binding site" evidence="1">
    <location>
        <position position="72"/>
    </location>
    <ligand>
        <name>ATP</name>
        <dbReference type="ChEBI" id="CHEBI:30616"/>
    </ligand>
</feature>
<feature type="binding site" evidence="1">
    <location>
        <begin position="205"/>
        <end position="207"/>
    </location>
    <ligand>
        <name>ATP</name>
        <dbReference type="ChEBI" id="CHEBI:30616"/>
    </ligand>
</feature>
<feature type="binding site" evidence="1">
    <location>
        <begin position="271"/>
        <end position="278"/>
    </location>
    <ligand>
        <name>ATP</name>
        <dbReference type="ChEBI" id="CHEBI:30616"/>
    </ligand>
</feature>
<feature type="binding site" evidence="1">
    <location>
        <begin position="342"/>
        <end position="345"/>
    </location>
    <ligand>
        <name>ATP</name>
        <dbReference type="ChEBI" id="CHEBI:30616"/>
    </ligand>
</feature>
<feature type="modified residue" description="Phosphoserine" evidence="3">
    <location>
        <position position="403"/>
    </location>
</feature>
<feature type="modified residue" description="Phosphothreonine" evidence="3">
    <location>
        <position position="408"/>
    </location>
</feature>
<feature type="modified residue" description="Phosphothreonine" evidence="3">
    <location>
        <position position="414"/>
    </location>
</feature>
<feature type="modified residue" description="N6,N6,N6-trimethyllysine; by METTL21A; in vitro" evidence="5">
    <location>
        <position position="564"/>
    </location>
</feature>
<feature type="sequence conflict" description="In Ref. 1; AAA30569." evidence="7" ref="1">
    <original>D</original>
    <variation>T</variation>
    <location>
        <position position="54"/>
    </location>
</feature>
<feature type="sequence conflict" description="In Ref. 1; AAA30569." evidence="7" ref="1">
    <original>S</original>
    <variation>R</variation>
    <location>
        <position position="239"/>
    </location>
</feature>
<feature type="sequence conflict" description="In Ref. 1; AAA30569." evidence="7" ref="1">
    <original>L</original>
    <variation>W</variation>
    <location>
        <position position="244"/>
    </location>
</feature>
<feature type="sequence conflict" description="In Ref. 1; AAA30569." evidence="7" ref="1">
    <original>NKRAVR</original>
    <variation>A</variation>
    <location>
        <begin position="259"/>
        <end position="264"/>
    </location>
</feature>
<feature type="sequence conflict" description="In Ref. 1; AAA30569." evidence="7" ref="1">
    <original>GT</original>
    <variation>VP</variation>
    <location>
        <begin position="315"/>
        <end position="316"/>
    </location>
</feature>
<feature type="sequence conflict" description="In Ref. 1; AAA30569." evidence="7" ref="1">
    <original>R</original>
    <variation>C</variation>
    <location>
        <position position="512"/>
    </location>
</feature>
<proteinExistence type="evidence at transcript level"/>
<organism>
    <name type="scientific">Bos taurus</name>
    <name type="common">Bovine</name>
    <dbReference type="NCBI Taxonomy" id="9913"/>
    <lineage>
        <taxon>Eukaryota</taxon>
        <taxon>Metazoa</taxon>
        <taxon>Chordata</taxon>
        <taxon>Craniata</taxon>
        <taxon>Vertebrata</taxon>
        <taxon>Euteleostomi</taxon>
        <taxon>Mammalia</taxon>
        <taxon>Eutheria</taxon>
        <taxon>Laurasiatheria</taxon>
        <taxon>Artiodactyla</taxon>
        <taxon>Ruminantia</taxon>
        <taxon>Pecora</taxon>
        <taxon>Bovidae</taxon>
        <taxon>Bovinae</taxon>
        <taxon>Bos</taxon>
    </lineage>
</organism>